<gene>
    <name type="ORF">v1g170558</name>
</gene>
<feature type="chain" id="PRO_0000365034" description="Eukaryotic translation initiation factor 3 subunit K">
    <location>
        <begin position="1"/>
        <end position="216"/>
    </location>
</feature>
<feature type="domain" description="PCI" evidence="2">
    <location>
        <begin position="40"/>
        <end position="202"/>
    </location>
</feature>
<comment type="function">
    <text evidence="1">Component of the eukaryotic translation initiation factor 3 (eIF-3) complex, which is involved in protein synthesis of a specialized repertoire of mRNAs and, together with other initiation factors, stimulates binding of mRNA and methionyl-tRNAi to the 40S ribosome. The eIF-3 complex specifically targets and initiates translation of a subset of mRNAs involved in cell proliferation.</text>
</comment>
<comment type="subunit">
    <text evidence="1">Component of the eukaryotic translation initiation factor 3 (eIF-3) complex.</text>
</comment>
<comment type="subcellular location">
    <subcellularLocation>
        <location evidence="1">Cytoplasm</location>
    </subcellularLocation>
</comment>
<comment type="similarity">
    <text evidence="1">Belongs to the eIF-3 subunit K family.</text>
</comment>
<accession>A7SGZ5</accession>
<reference key="1">
    <citation type="journal article" date="2007" name="Science">
        <title>Sea anemone genome reveals ancestral eumetazoan gene repertoire and genomic organization.</title>
        <authorList>
            <person name="Putnam N.H."/>
            <person name="Srivastava M."/>
            <person name="Hellsten U."/>
            <person name="Dirks B."/>
            <person name="Chapman J."/>
            <person name="Salamov A."/>
            <person name="Terry A."/>
            <person name="Shapiro H."/>
            <person name="Lindquist E."/>
            <person name="Kapitonov V.V."/>
            <person name="Jurka J."/>
            <person name="Genikhovich G."/>
            <person name="Grigoriev I.V."/>
            <person name="Lucas S.M."/>
            <person name="Steele R.E."/>
            <person name="Finnerty J.R."/>
            <person name="Technau U."/>
            <person name="Martindale M.Q."/>
            <person name="Rokhsar D.S."/>
        </authorList>
    </citation>
    <scope>NUCLEOTIDE SEQUENCE [LARGE SCALE GENOMIC DNA]</scope>
    <source>
        <strain>CH2 X CH6</strain>
    </source>
</reference>
<organism>
    <name type="scientific">Nematostella vectensis</name>
    <name type="common">Starlet sea anemone</name>
    <dbReference type="NCBI Taxonomy" id="45351"/>
    <lineage>
        <taxon>Eukaryota</taxon>
        <taxon>Metazoa</taxon>
        <taxon>Cnidaria</taxon>
        <taxon>Anthozoa</taxon>
        <taxon>Hexacorallia</taxon>
        <taxon>Actiniaria</taxon>
        <taxon>Edwardsiidae</taxon>
        <taxon>Nematostella</taxon>
    </lineage>
</organism>
<name>EIF3K_NEMVE</name>
<protein>
    <recommendedName>
        <fullName evidence="1">Eukaryotic translation initiation factor 3 subunit K</fullName>
        <shortName evidence="1">eIF3k</shortName>
    </recommendedName>
    <alternativeName>
        <fullName evidence="1">eIF-3 p25</fullName>
    </alternativeName>
</protein>
<sequence>MAAEMRVTVSQLLKGIDRYNPENLKVLEHYVHLQVHENAYDLDANLAVLKLYQFNPAYSQTSVISQILLKALMNLPNADFIMCRCVIDDAIQQDLTIKKVILLAERLETCAFTSAWQFIKEEASLVDGVTGFHDAIRNYITYVIGVTYQTIEESLASELLGGLQGAQLQDWIKAKGWMSSDDGTIYVTNQEAHIKSKNIAEKIDFASVANIIAAAR</sequence>
<evidence type="ECO:0000255" key="1">
    <source>
        <dbReference type="HAMAP-Rule" id="MF_03010"/>
    </source>
</evidence>
<evidence type="ECO:0000255" key="2">
    <source>
        <dbReference type="PROSITE-ProRule" id="PRU01185"/>
    </source>
</evidence>
<proteinExistence type="inferred from homology"/>
<keyword id="KW-0963">Cytoplasm</keyword>
<keyword id="KW-0396">Initiation factor</keyword>
<keyword id="KW-0648">Protein biosynthesis</keyword>
<keyword id="KW-1185">Reference proteome</keyword>
<dbReference type="EMBL" id="DS469656">
    <property type="protein sequence ID" value="EDO37003.1"/>
    <property type="molecule type" value="Genomic_DNA"/>
</dbReference>
<dbReference type="SMR" id="A7SGZ5"/>
<dbReference type="STRING" id="45351.A7SGZ5"/>
<dbReference type="EnsemblMetazoa" id="EDO37003">
    <property type="protein sequence ID" value="EDO37003"/>
    <property type="gene ID" value="NEMVEDRAFT_v1g170558"/>
</dbReference>
<dbReference type="KEGG" id="nve:5508490"/>
<dbReference type="eggNOG" id="KOG3252">
    <property type="taxonomic scope" value="Eukaryota"/>
</dbReference>
<dbReference type="HOGENOM" id="CLU_076723_1_0_1"/>
<dbReference type="InParanoid" id="A7SGZ5"/>
<dbReference type="OMA" id="GDDLCAD"/>
<dbReference type="OrthoDB" id="337745at2759"/>
<dbReference type="PhylomeDB" id="A7SGZ5"/>
<dbReference type="Proteomes" id="UP000001593">
    <property type="component" value="Unassembled WGS sequence"/>
</dbReference>
<dbReference type="GO" id="GO:0016282">
    <property type="term" value="C:eukaryotic 43S preinitiation complex"/>
    <property type="evidence" value="ECO:0007669"/>
    <property type="project" value="UniProtKB-UniRule"/>
</dbReference>
<dbReference type="GO" id="GO:0033290">
    <property type="term" value="C:eukaryotic 48S preinitiation complex"/>
    <property type="evidence" value="ECO:0007669"/>
    <property type="project" value="UniProtKB-UniRule"/>
</dbReference>
<dbReference type="GO" id="GO:0005852">
    <property type="term" value="C:eukaryotic translation initiation factor 3 complex"/>
    <property type="evidence" value="ECO:0000318"/>
    <property type="project" value="GO_Central"/>
</dbReference>
<dbReference type="GO" id="GO:0043022">
    <property type="term" value="F:ribosome binding"/>
    <property type="evidence" value="ECO:0007669"/>
    <property type="project" value="InterPro"/>
</dbReference>
<dbReference type="GO" id="GO:0003723">
    <property type="term" value="F:RNA binding"/>
    <property type="evidence" value="ECO:0007669"/>
    <property type="project" value="UniProtKB-UniRule"/>
</dbReference>
<dbReference type="GO" id="GO:0003743">
    <property type="term" value="F:translation initiation factor activity"/>
    <property type="evidence" value="ECO:0007669"/>
    <property type="project" value="UniProtKB-UniRule"/>
</dbReference>
<dbReference type="GO" id="GO:0001732">
    <property type="term" value="P:formation of cytoplasmic translation initiation complex"/>
    <property type="evidence" value="ECO:0007669"/>
    <property type="project" value="UniProtKB-UniRule"/>
</dbReference>
<dbReference type="GO" id="GO:0006446">
    <property type="term" value="P:regulation of translational initiation"/>
    <property type="evidence" value="ECO:0007669"/>
    <property type="project" value="InterPro"/>
</dbReference>
<dbReference type="FunFam" id="1.10.10.10:FF:000212">
    <property type="entry name" value="Eukaryotic translation initiation factor 3 subunit K"/>
    <property type="match status" value="1"/>
</dbReference>
<dbReference type="FunFam" id="1.25.40.250:FF:000001">
    <property type="entry name" value="Eukaryotic translation initiation factor 3 subunit K"/>
    <property type="match status" value="1"/>
</dbReference>
<dbReference type="Gene3D" id="1.25.40.250">
    <property type="entry name" value="ARM repeat, domain 1"/>
    <property type="match status" value="1"/>
</dbReference>
<dbReference type="Gene3D" id="1.10.10.10">
    <property type="entry name" value="Winged helix-like DNA-binding domain superfamily/Winged helix DNA-binding domain"/>
    <property type="match status" value="1"/>
</dbReference>
<dbReference type="HAMAP" id="MF_03010">
    <property type="entry name" value="eIF3k"/>
    <property type="match status" value="1"/>
</dbReference>
<dbReference type="InterPro" id="IPR016024">
    <property type="entry name" value="ARM-type_fold"/>
</dbReference>
<dbReference type="InterPro" id="IPR033464">
    <property type="entry name" value="CSN8_PSD8_EIF3K"/>
</dbReference>
<dbReference type="InterPro" id="IPR009374">
    <property type="entry name" value="eIF3k"/>
</dbReference>
<dbReference type="InterPro" id="IPR000717">
    <property type="entry name" value="PCI_dom"/>
</dbReference>
<dbReference type="InterPro" id="IPR016020">
    <property type="entry name" value="Transl_init_fac_sub12_N_euk"/>
</dbReference>
<dbReference type="InterPro" id="IPR036388">
    <property type="entry name" value="WH-like_DNA-bd_sf"/>
</dbReference>
<dbReference type="InterPro" id="IPR036390">
    <property type="entry name" value="WH_DNA-bd_sf"/>
</dbReference>
<dbReference type="PANTHER" id="PTHR13022">
    <property type="entry name" value="EUKARYOTIC TRANSLATION INITIATION FACTOR 3 SUBUNIT 11"/>
    <property type="match status" value="1"/>
</dbReference>
<dbReference type="PANTHER" id="PTHR13022:SF0">
    <property type="entry name" value="EUKARYOTIC TRANSLATION INITIATION FACTOR 3 SUBUNIT K"/>
    <property type="match status" value="1"/>
</dbReference>
<dbReference type="Pfam" id="PF10075">
    <property type="entry name" value="CSN8_PSD8_EIF3K"/>
    <property type="match status" value="1"/>
</dbReference>
<dbReference type="SUPFAM" id="SSF48371">
    <property type="entry name" value="ARM repeat"/>
    <property type="match status" value="1"/>
</dbReference>
<dbReference type="SUPFAM" id="SSF46785">
    <property type="entry name" value="Winged helix' DNA-binding domain"/>
    <property type="match status" value="1"/>
</dbReference>
<dbReference type="PROSITE" id="PS50250">
    <property type="entry name" value="PCI"/>
    <property type="match status" value="1"/>
</dbReference>